<evidence type="ECO:0000255" key="1">
    <source>
        <dbReference type="HAMAP-Rule" id="MF_00360"/>
    </source>
</evidence>
<evidence type="ECO:0000305" key="2"/>
<proteinExistence type="inferred from homology"/>
<organism>
    <name type="scientific">Nocardia farcinica (strain IFM 10152)</name>
    <dbReference type="NCBI Taxonomy" id="247156"/>
    <lineage>
        <taxon>Bacteria</taxon>
        <taxon>Bacillati</taxon>
        <taxon>Actinomycetota</taxon>
        <taxon>Actinomycetes</taxon>
        <taxon>Mycobacteriales</taxon>
        <taxon>Nocardiaceae</taxon>
        <taxon>Nocardia</taxon>
    </lineage>
</organism>
<gene>
    <name evidence="1" type="primary">rpsF</name>
    <name type="ordered locus">NFA_55720</name>
</gene>
<comment type="function">
    <text evidence="1">Binds together with bS18 to 16S ribosomal RNA.</text>
</comment>
<comment type="similarity">
    <text evidence="1">Belongs to the bacterial ribosomal protein bS6 family.</text>
</comment>
<reference key="1">
    <citation type="journal article" date="2004" name="Proc. Natl. Acad. Sci. U.S.A.">
        <title>The complete genomic sequence of Nocardia farcinica IFM 10152.</title>
        <authorList>
            <person name="Ishikawa J."/>
            <person name="Yamashita A."/>
            <person name="Mikami Y."/>
            <person name="Hoshino Y."/>
            <person name="Kurita H."/>
            <person name="Hotta K."/>
            <person name="Shiba T."/>
            <person name="Hattori M."/>
        </authorList>
    </citation>
    <scope>NUCLEOTIDE SEQUENCE [LARGE SCALE GENOMIC DNA]</scope>
    <source>
        <strain>IFM 10152</strain>
    </source>
</reference>
<accession>Q5YN17</accession>
<protein>
    <recommendedName>
        <fullName evidence="1">Small ribosomal subunit protein bS6</fullName>
    </recommendedName>
    <alternativeName>
        <fullName evidence="2">30S ribosomal protein S6</fullName>
    </alternativeName>
</protein>
<dbReference type="EMBL" id="AP006618">
    <property type="protein sequence ID" value="BAD60424.1"/>
    <property type="molecule type" value="Genomic_DNA"/>
</dbReference>
<dbReference type="RefSeq" id="WP_011212106.1">
    <property type="nucleotide sequence ID" value="NC_006361.1"/>
</dbReference>
<dbReference type="SMR" id="Q5YN17"/>
<dbReference type="STRING" id="247156.NFA_55720"/>
<dbReference type="GeneID" id="61136139"/>
<dbReference type="KEGG" id="nfa:NFA_55720"/>
<dbReference type="eggNOG" id="COG0360">
    <property type="taxonomic scope" value="Bacteria"/>
</dbReference>
<dbReference type="HOGENOM" id="CLU_113441_5_3_11"/>
<dbReference type="OrthoDB" id="9812702at2"/>
<dbReference type="Proteomes" id="UP000006820">
    <property type="component" value="Chromosome"/>
</dbReference>
<dbReference type="GO" id="GO:0005737">
    <property type="term" value="C:cytoplasm"/>
    <property type="evidence" value="ECO:0007669"/>
    <property type="project" value="UniProtKB-ARBA"/>
</dbReference>
<dbReference type="GO" id="GO:1990904">
    <property type="term" value="C:ribonucleoprotein complex"/>
    <property type="evidence" value="ECO:0007669"/>
    <property type="project" value="UniProtKB-KW"/>
</dbReference>
<dbReference type="GO" id="GO:0005840">
    <property type="term" value="C:ribosome"/>
    <property type="evidence" value="ECO:0007669"/>
    <property type="project" value="UniProtKB-KW"/>
</dbReference>
<dbReference type="GO" id="GO:0070181">
    <property type="term" value="F:small ribosomal subunit rRNA binding"/>
    <property type="evidence" value="ECO:0007669"/>
    <property type="project" value="TreeGrafter"/>
</dbReference>
<dbReference type="GO" id="GO:0003735">
    <property type="term" value="F:structural constituent of ribosome"/>
    <property type="evidence" value="ECO:0007669"/>
    <property type="project" value="InterPro"/>
</dbReference>
<dbReference type="GO" id="GO:0006412">
    <property type="term" value="P:translation"/>
    <property type="evidence" value="ECO:0007669"/>
    <property type="project" value="UniProtKB-UniRule"/>
</dbReference>
<dbReference type="CDD" id="cd00473">
    <property type="entry name" value="bS6"/>
    <property type="match status" value="1"/>
</dbReference>
<dbReference type="FunFam" id="3.30.70.60:FF:000002">
    <property type="entry name" value="30S ribosomal protein S6"/>
    <property type="match status" value="1"/>
</dbReference>
<dbReference type="Gene3D" id="3.30.70.60">
    <property type="match status" value="1"/>
</dbReference>
<dbReference type="HAMAP" id="MF_00360">
    <property type="entry name" value="Ribosomal_bS6"/>
    <property type="match status" value="1"/>
</dbReference>
<dbReference type="InterPro" id="IPR000529">
    <property type="entry name" value="Ribosomal_bS6"/>
</dbReference>
<dbReference type="InterPro" id="IPR020815">
    <property type="entry name" value="Ribosomal_bS6_CS"/>
</dbReference>
<dbReference type="InterPro" id="IPR035980">
    <property type="entry name" value="Ribosomal_bS6_sf"/>
</dbReference>
<dbReference type="InterPro" id="IPR020814">
    <property type="entry name" value="Ribosomal_S6_plastid/chlpt"/>
</dbReference>
<dbReference type="InterPro" id="IPR014717">
    <property type="entry name" value="Transl_elong_EF1B/ribsomal_bS6"/>
</dbReference>
<dbReference type="NCBIfam" id="TIGR00166">
    <property type="entry name" value="S6"/>
    <property type="match status" value="1"/>
</dbReference>
<dbReference type="PANTHER" id="PTHR21011">
    <property type="entry name" value="MITOCHONDRIAL 28S RIBOSOMAL PROTEIN S6"/>
    <property type="match status" value="1"/>
</dbReference>
<dbReference type="PANTHER" id="PTHR21011:SF1">
    <property type="entry name" value="SMALL RIBOSOMAL SUBUNIT PROTEIN BS6M"/>
    <property type="match status" value="1"/>
</dbReference>
<dbReference type="Pfam" id="PF01250">
    <property type="entry name" value="Ribosomal_S6"/>
    <property type="match status" value="1"/>
</dbReference>
<dbReference type="SUPFAM" id="SSF54995">
    <property type="entry name" value="Ribosomal protein S6"/>
    <property type="match status" value="1"/>
</dbReference>
<dbReference type="PROSITE" id="PS01048">
    <property type="entry name" value="RIBOSOMAL_S6"/>
    <property type="match status" value="1"/>
</dbReference>
<sequence>MRHYEVMVILDPSLDERTVGPSLENMLGVVKTEGGKIDKVDIWGRRRLAYEIRKQAEGIYAVIDLTASPATVNELDRQLGLNESVLRTKVLRHDK</sequence>
<feature type="chain" id="PRO_0000176807" description="Small ribosomal subunit protein bS6">
    <location>
        <begin position="1"/>
        <end position="95"/>
    </location>
</feature>
<keyword id="KW-1185">Reference proteome</keyword>
<keyword id="KW-0687">Ribonucleoprotein</keyword>
<keyword id="KW-0689">Ribosomal protein</keyword>
<keyword id="KW-0694">RNA-binding</keyword>
<keyword id="KW-0699">rRNA-binding</keyword>
<name>RS6_NOCFA</name>